<reference key="1">
    <citation type="journal article" date="1994" name="Science">
        <title>Complete nucleotide sequence of Saccharomyces cerevisiae chromosome VIII.</title>
        <authorList>
            <person name="Johnston M."/>
            <person name="Andrews S."/>
            <person name="Brinkman R."/>
            <person name="Cooper J."/>
            <person name="Ding H."/>
            <person name="Dover J."/>
            <person name="Du Z."/>
            <person name="Favello A."/>
            <person name="Fulton L."/>
            <person name="Gattung S."/>
            <person name="Geisel C."/>
            <person name="Kirsten J."/>
            <person name="Kucaba T."/>
            <person name="Hillier L.W."/>
            <person name="Jier M."/>
            <person name="Johnston L."/>
            <person name="Langston Y."/>
            <person name="Latreille P."/>
            <person name="Louis E.J."/>
            <person name="Macri C."/>
            <person name="Mardis E."/>
            <person name="Menezes S."/>
            <person name="Mouser L."/>
            <person name="Nhan M."/>
            <person name="Rifkin L."/>
            <person name="Riles L."/>
            <person name="St Peter H."/>
            <person name="Trevaskis E."/>
            <person name="Vaughan K."/>
            <person name="Vignati D."/>
            <person name="Wilcox L."/>
            <person name="Wohldman P."/>
            <person name="Waterston R."/>
            <person name="Wilson R."/>
            <person name="Vaudin M."/>
        </authorList>
    </citation>
    <scope>NUCLEOTIDE SEQUENCE [LARGE SCALE GENOMIC DNA]</scope>
    <source>
        <strain>ATCC 204508 / S288c</strain>
    </source>
</reference>
<reference key="2">
    <citation type="journal article" date="2014" name="G3 (Bethesda)">
        <title>The reference genome sequence of Saccharomyces cerevisiae: Then and now.</title>
        <authorList>
            <person name="Engel S.R."/>
            <person name="Dietrich F.S."/>
            <person name="Fisk D.G."/>
            <person name="Binkley G."/>
            <person name="Balakrishnan R."/>
            <person name="Costanzo M.C."/>
            <person name="Dwight S.S."/>
            <person name="Hitz B.C."/>
            <person name="Karra K."/>
            <person name="Nash R.S."/>
            <person name="Weng S."/>
            <person name="Wong E.D."/>
            <person name="Lloyd P."/>
            <person name="Skrzypek M.S."/>
            <person name="Miyasato S.R."/>
            <person name="Simison M."/>
            <person name="Cherry J.M."/>
        </authorList>
    </citation>
    <scope>GENOME REANNOTATION</scope>
    <source>
        <strain>ATCC 204508 / S288c</strain>
    </source>
</reference>
<reference key="3">
    <citation type="journal article" date="1997" name="EMBO J.">
        <title>The spindle pole body component Spc97p interacts with the gamma-tubulin of Saccharomyces cerevisiae and functions in microtubule organization and spindle pole body duplication.</title>
        <authorList>
            <person name="Knop M."/>
            <person name="Pereira G."/>
            <person name="Geissler S."/>
            <person name="Grein K."/>
            <person name="Schiebel E."/>
        </authorList>
    </citation>
    <scope>CHARACTERIZATION</scope>
</reference>
<reference key="4">
    <citation type="journal article" date="1998" name="EMBO J.">
        <title>Receptors determine the cellular localization of a gamma-tubulin complex and thereby the site of microtubule formation.</title>
        <authorList>
            <person name="Knop M."/>
            <person name="Schiebel E."/>
        </authorList>
    </citation>
    <scope>INTERACTION WITH SPC72</scope>
</reference>
<reference key="5">
    <citation type="journal article" date="2003" name="Nature">
        <title>Global analysis of protein expression in yeast.</title>
        <authorList>
            <person name="Ghaemmaghami S."/>
            <person name="Huh W.-K."/>
            <person name="Bower K."/>
            <person name="Howson R.W."/>
            <person name="Belle A."/>
            <person name="Dephoure N."/>
            <person name="O'Shea E.K."/>
            <person name="Weissman J.S."/>
        </authorList>
    </citation>
    <scope>LEVEL OF PROTEIN EXPRESSION [LARGE SCALE ANALYSIS]</scope>
</reference>
<reference key="6">
    <citation type="journal article" date="2008" name="Mol. Cell. Proteomics">
        <title>A multidimensional chromatography technology for in-depth phosphoproteome analysis.</title>
        <authorList>
            <person name="Albuquerque C.P."/>
            <person name="Smolka M.B."/>
            <person name="Payne S.H."/>
            <person name="Bafna V."/>
            <person name="Eng J."/>
            <person name="Zhou H."/>
        </authorList>
    </citation>
    <scope>IDENTIFICATION BY MASS SPECTROMETRY [LARGE SCALE ANALYSIS]</scope>
</reference>
<reference key="7">
    <citation type="journal article" date="2012" name="Proc. Natl. Acad. Sci. U.S.A.">
        <title>N-terminal acetylome analyses and functional insights of the N-terminal acetyltransferase NatB.</title>
        <authorList>
            <person name="Van Damme P."/>
            <person name="Lasa M."/>
            <person name="Polevoda B."/>
            <person name="Gazquez C."/>
            <person name="Elosegui-Artola A."/>
            <person name="Kim D.S."/>
            <person name="De Juan-Pardo E."/>
            <person name="Demeyer K."/>
            <person name="Hole K."/>
            <person name="Larrea E."/>
            <person name="Timmerman E."/>
            <person name="Prieto J."/>
            <person name="Arnesen T."/>
            <person name="Sherman F."/>
            <person name="Gevaert K."/>
            <person name="Aldabe R."/>
        </authorList>
    </citation>
    <scope>IDENTIFICATION BY MASS SPECTROMETRY [LARGE SCALE ANALYSIS]</scope>
</reference>
<keyword id="KW-0002">3D-structure</keyword>
<keyword id="KW-0963">Cytoplasm</keyword>
<keyword id="KW-0206">Cytoskeleton</keyword>
<keyword id="KW-0493">Microtubule</keyword>
<keyword id="KW-0539">Nucleus</keyword>
<keyword id="KW-1185">Reference proteome</keyword>
<gene>
    <name type="primary">SPC97</name>
    <name type="ordered locus">YHR172W</name>
</gene>
<protein>
    <recommendedName>
        <fullName>Spindle pole body component SPC97</fullName>
    </recommendedName>
</protein>
<dbReference type="EMBL" id="U00027">
    <property type="protein sequence ID" value="AAB68017.1"/>
    <property type="molecule type" value="Genomic_DNA"/>
</dbReference>
<dbReference type="EMBL" id="BK006934">
    <property type="protein sequence ID" value="DAA06865.1"/>
    <property type="molecule type" value="Genomic_DNA"/>
</dbReference>
<dbReference type="PIR" id="S48911">
    <property type="entry name" value="S48911"/>
</dbReference>
<dbReference type="RefSeq" id="NP_012042.1">
    <property type="nucleotide sequence ID" value="NM_001179303.1"/>
</dbReference>
<dbReference type="PDB" id="5FLZ">
    <property type="method" value="EM"/>
    <property type="resolution" value="6.90 A"/>
    <property type="chains" value="A=1-823"/>
</dbReference>
<dbReference type="PDB" id="5FM1">
    <property type="method" value="EM"/>
    <property type="resolution" value="8.00 A"/>
    <property type="chains" value="A=1-823"/>
</dbReference>
<dbReference type="PDB" id="7M2W">
    <property type="method" value="EM"/>
    <property type="resolution" value="3.00 A"/>
    <property type="chains" value="E/G=1-823"/>
</dbReference>
<dbReference type="PDB" id="7M2X">
    <property type="method" value="EM"/>
    <property type="resolution" value="3.60 A"/>
    <property type="chains" value="C=1-823"/>
</dbReference>
<dbReference type="PDB" id="7M2Y">
    <property type="method" value="EM"/>
    <property type="resolution" value="4.03 A"/>
    <property type="chains" value="D=1-823"/>
</dbReference>
<dbReference type="PDB" id="7M2Z">
    <property type="method" value="EM"/>
    <property type="resolution" value="3.70 A"/>
    <property type="chains" value="D=1-823"/>
</dbReference>
<dbReference type="PDB" id="8QV2">
    <property type="method" value="EM"/>
    <property type="resolution" value="9.20 A"/>
    <property type="chains" value="C/E/G/I/K/M/O=1-823"/>
</dbReference>
<dbReference type="PDB" id="8QV3">
    <property type="method" value="EM"/>
    <property type="resolution" value="8.20 A"/>
    <property type="chains" value="E=1-823"/>
</dbReference>
<dbReference type="PDBsum" id="5FLZ"/>
<dbReference type="PDBsum" id="5FM1"/>
<dbReference type="PDBsum" id="7M2W"/>
<dbReference type="PDBsum" id="7M2X"/>
<dbReference type="PDBsum" id="7M2Y"/>
<dbReference type="PDBsum" id="7M2Z"/>
<dbReference type="PDBsum" id="8QV2"/>
<dbReference type="PDBsum" id="8QV3"/>
<dbReference type="EMDB" id="EMD-23635"/>
<dbReference type="EMDB" id="EMD-23636"/>
<dbReference type="EMDB" id="EMD-23637"/>
<dbReference type="EMDB" id="EMD-23638"/>
<dbReference type="EMDB" id="EMD-2799"/>
<dbReference type="SMR" id="P38863"/>
<dbReference type="BioGRID" id="36606">
    <property type="interactions" value="166"/>
</dbReference>
<dbReference type="ComplexPortal" id="CPX-1198">
    <property type="entry name" value="Gamma tubulin small complex"/>
</dbReference>
<dbReference type="DIP" id="DIP-826N"/>
<dbReference type="FunCoup" id="P38863">
    <property type="interactions" value="827"/>
</dbReference>
<dbReference type="IntAct" id="P38863">
    <property type="interactions" value="15"/>
</dbReference>
<dbReference type="MINT" id="P38863"/>
<dbReference type="STRING" id="4932.YHR172W"/>
<dbReference type="iPTMnet" id="P38863"/>
<dbReference type="PaxDb" id="4932-YHR172W"/>
<dbReference type="PeptideAtlas" id="P38863"/>
<dbReference type="EnsemblFungi" id="YHR172W_mRNA">
    <property type="protein sequence ID" value="YHR172W"/>
    <property type="gene ID" value="YHR172W"/>
</dbReference>
<dbReference type="GeneID" id="856577"/>
<dbReference type="KEGG" id="sce:YHR172W"/>
<dbReference type="AGR" id="SGD:S000001215"/>
<dbReference type="SGD" id="S000001215">
    <property type="gene designation" value="SPC97"/>
</dbReference>
<dbReference type="VEuPathDB" id="FungiDB:YHR172W"/>
<dbReference type="eggNOG" id="KOG2001">
    <property type="taxonomic scope" value="Eukaryota"/>
</dbReference>
<dbReference type="GeneTree" id="ENSGT00940000156697"/>
<dbReference type="HOGENOM" id="CLU_007738_2_0_1"/>
<dbReference type="InParanoid" id="P38863"/>
<dbReference type="OMA" id="QNMSGDP"/>
<dbReference type="OrthoDB" id="2192946at2759"/>
<dbReference type="BioCyc" id="YEAST:G3O-31206-MONOMER"/>
<dbReference type="BioGRID-ORCS" id="856577">
    <property type="hits" value="0 hits in 10 CRISPR screens"/>
</dbReference>
<dbReference type="CD-CODE" id="876000F7">
    <property type="entry name" value="Centrosome"/>
</dbReference>
<dbReference type="EvolutionaryTrace" id="P38863"/>
<dbReference type="PRO" id="PR:P38863"/>
<dbReference type="Proteomes" id="UP000002311">
    <property type="component" value="Chromosome VIII"/>
</dbReference>
<dbReference type="RNAct" id="P38863">
    <property type="molecule type" value="protein"/>
</dbReference>
<dbReference type="GO" id="GO:0005737">
    <property type="term" value="C:cytoplasm"/>
    <property type="evidence" value="ECO:0007669"/>
    <property type="project" value="UniProtKB-KW"/>
</dbReference>
<dbReference type="GO" id="GO:0000930">
    <property type="term" value="C:gamma-tubulin complex"/>
    <property type="evidence" value="ECO:0000318"/>
    <property type="project" value="GO_Central"/>
</dbReference>
<dbReference type="GO" id="GO:0008275">
    <property type="term" value="C:gamma-tubulin small complex"/>
    <property type="evidence" value="ECO:0000314"/>
    <property type="project" value="SGD"/>
</dbReference>
<dbReference type="GO" id="GO:0005822">
    <property type="term" value="C:inner plaque of spindle pole body"/>
    <property type="evidence" value="ECO:0000314"/>
    <property type="project" value="SGD"/>
</dbReference>
<dbReference type="GO" id="GO:0005874">
    <property type="term" value="C:microtubule"/>
    <property type="evidence" value="ECO:0007669"/>
    <property type="project" value="UniProtKB-KW"/>
</dbReference>
<dbReference type="GO" id="GO:0044732">
    <property type="term" value="C:mitotic spindle pole body"/>
    <property type="evidence" value="ECO:0000318"/>
    <property type="project" value="GO_Central"/>
</dbReference>
<dbReference type="GO" id="GO:0005634">
    <property type="term" value="C:nucleus"/>
    <property type="evidence" value="ECO:0007669"/>
    <property type="project" value="UniProtKB-SubCell"/>
</dbReference>
<dbReference type="GO" id="GO:0005824">
    <property type="term" value="C:outer plaque of spindle pole body"/>
    <property type="evidence" value="ECO:0000314"/>
    <property type="project" value="SGD"/>
</dbReference>
<dbReference type="GO" id="GO:0000922">
    <property type="term" value="C:spindle pole"/>
    <property type="evidence" value="ECO:0007669"/>
    <property type="project" value="InterPro"/>
</dbReference>
<dbReference type="GO" id="GO:0005816">
    <property type="term" value="C:spindle pole body"/>
    <property type="evidence" value="ECO:0007005"/>
    <property type="project" value="SGD"/>
</dbReference>
<dbReference type="GO" id="GO:0043015">
    <property type="term" value="F:gamma-tubulin binding"/>
    <property type="evidence" value="ECO:0000353"/>
    <property type="project" value="SGD"/>
</dbReference>
<dbReference type="GO" id="GO:0031122">
    <property type="term" value="P:cytoplasmic microtubule organization"/>
    <property type="evidence" value="ECO:0000315"/>
    <property type="project" value="SGD"/>
</dbReference>
<dbReference type="GO" id="GO:0051321">
    <property type="term" value="P:meiotic cell cycle"/>
    <property type="evidence" value="ECO:0000318"/>
    <property type="project" value="GO_Central"/>
</dbReference>
<dbReference type="GO" id="GO:0007020">
    <property type="term" value="P:microtubule nucleation"/>
    <property type="evidence" value="ECO:0000314"/>
    <property type="project" value="SGD"/>
</dbReference>
<dbReference type="GO" id="GO:0000278">
    <property type="term" value="P:mitotic cell cycle"/>
    <property type="evidence" value="ECO:0000318"/>
    <property type="project" value="GO_Central"/>
</dbReference>
<dbReference type="GO" id="GO:0010968">
    <property type="term" value="P:regulation of microtubule nucleation"/>
    <property type="evidence" value="ECO:0000269"/>
    <property type="project" value="ComplexPortal"/>
</dbReference>
<dbReference type="GO" id="GO:0051225">
    <property type="term" value="P:spindle assembly"/>
    <property type="evidence" value="ECO:0000318"/>
    <property type="project" value="GO_Central"/>
</dbReference>
<dbReference type="Gene3D" id="1.20.120.1900">
    <property type="entry name" value="Gamma-tubulin complex, C-terminal domain"/>
    <property type="match status" value="1"/>
</dbReference>
<dbReference type="InterPro" id="IPR007259">
    <property type="entry name" value="GCP"/>
</dbReference>
<dbReference type="InterPro" id="IPR040457">
    <property type="entry name" value="GCP_C"/>
</dbReference>
<dbReference type="InterPro" id="IPR042241">
    <property type="entry name" value="GCP_C_sf"/>
</dbReference>
<dbReference type="InterPro" id="IPR041470">
    <property type="entry name" value="GCP_N"/>
</dbReference>
<dbReference type="PANTHER" id="PTHR19302">
    <property type="entry name" value="GAMMA TUBULIN COMPLEX PROTEIN"/>
    <property type="match status" value="1"/>
</dbReference>
<dbReference type="PANTHER" id="PTHR19302:SF13">
    <property type="entry name" value="GAMMA-TUBULIN COMPLEX COMPONENT 2"/>
    <property type="match status" value="1"/>
</dbReference>
<dbReference type="Pfam" id="PF04130">
    <property type="entry name" value="GCP_C_terminal"/>
    <property type="match status" value="1"/>
</dbReference>
<dbReference type="Pfam" id="PF17681">
    <property type="entry name" value="GCP_N_terminal"/>
    <property type="match status" value="1"/>
</dbReference>
<feature type="chain" id="PRO_0000078117" description="Spindle pole body component SPC97">
    <location>
        <begin position="1"/>
        <end position="823"/>
    </location>
</feature>
<feature type="strand" evidence="4">
    <location>
        <begin position="17"/>
        <end position="19"/>
    </location>
</feature>
<feature type="turn" evidence="4">
    <location>
        <begin position="32"/>
        <end position="34"/>
    </location>
</feature>
<feature type="strand" evidence="4">
    <location>
        <begin position="37"/>
        <end position="39"/>
    </location>
</feature>
<feature type="helix" evidence="4">
    <location>
        <begin position="43"/>
        <end position="46"/>
    </location>
</feature>
<feature type="helix" evidence="4">
    <location>
        <begin position="52"/>
        <end position="66"/>
    </location>
</feature>
<feature type="turn" evidence="4">
    <location>
        <begin position="67"/>
        <end position="69"/>
    </location>
</feature>
<feature type="strand" evidence="4">
    <location>
        <begin position="73"/>
        <end position="77"/>
    </location>
</feature>
<feature type="strand" evidence="4">
    <location>
        <begin position="92"/>
        <end position="94"/>
    </location>
</feature>
<feature type="helix" evidence="4">
    <location>
        <begin position="100"/>
        <end position="126"/>
    </location>
</feature>
<feature type="helix" evidence="4">
    <location>
        <begin position="129"/>
        <end position="131"/>
    </location>
</feature>
<feature type="helix" evidence="4">
    <location>
        <begin position="132"/>
        <end position="148"/>
    </location>
</feature>
<feature type="helix" evidence="4">
    <location>
        <begin position="150"/>
        <end position="156"/>
    </location>
</feature>
<feature type="helix" evidence="4">
    <location>
        <begin position="158"/>
        <end position="164"/>
    </location>
</feature>
<feature type="helix" evidence="4">
    <location>
        <begin position="170"/>
        <end position="179"/>
    </location>
</feature>
<feature type="helix" evidence="4">
    <location>
        <begin position="182"/>
        <end position="205"/>
    </location>
</feature>
<feature type="helix" evidence="4">
    <location>
        <begin position="223"/>
        <end position="225"/>
    </location>
</feature>
<feature type="strand" evidence="4">
    <location>
        <begin position="232"/>
        <end position="235"/>
    </location>
</feature>
<feature type="helix" evidence="4">
    <location>
        <begin position="245"/>
        <end position="257"/>
    </location>
</feature>
<feature type="helix" evidence="4">
    <location>
        <begin position="262"/>
        <end position="275"/>
    </location>
</feature>
<feature type="helix" evidence="4">
    <location>
        <begin position="277"/>
        <end position="289"/>
    </location>
</feature>
<feature type="strand" evidence="4">
    <location>
        <begin position="295"/>
        <end position="297"/>
    </location>
</feature>
<feature type="strand" evidence="4">
    <location>
        <begin position="299"/>
        <end position="302"/>
    </location>
</feature>
<feature type="strand" evidence="4">
    <location>
        <begin position="324"/>
        <end position="330"/>
    </location>
</feature>
<feature type="helix" evidence="4">
    <location>
        <begin position="338"/>
        <end position="360"/>
    </location>
</feature>
<feature type="strand" evidence="4">
    <location>
        <begin position="370"/>
        <end position="372"/>
    </location>
</feature>
<feature type="helix" evidence="4">
    <location>
        <begin position="381"/>
        <end position="386"/>
    </location>
</feature>
<feature type="helix" evidence="4">
    <location>
        <begin position="389"/>
        <end position="411"/>
    </location>
</feature>
<feature type="helix" evidence="4">
    <location>
        <begin position="415"/>
        <end position="426"/>
    </location>
</feature>
<feature type="helix" evidence="4">
    <location>
        <begin position="432"/>
        <end position="451"/>
    </location>
</feature>
<feature type="helix" evidence="4">
    <location>
        <begin position="459"/>
        <end position="470"/>
    </location>
</feature>
<feature type="helix" evidence="4">
    <location>
        <begin position="477"/>
        <end position="480"/>
    </location>
</feature>
<feature type="strand" evidence="4">
    <location>
        <begin position="482"/>
        <end position="486"/>
    </location>
</feature>
<feature type="helix" evidence="4">
    <location>
        <begin position="491"/>
        <end position="495"/>
    </location>
</feature>
<feature type="turn" evidence="4">
    <location>
        <begin position="496"/>
        <end position="498"/>
    </location>
</feature>
<feature type="strand" evidence="4">
    <location>
        <begin position="560"/>
        <end position="564"/>
    </location>
</feature>
<feature type="helix" evidence="4">
    <location>
        <begin position="570"/>
        <end position="572"/>
    </location>
</feature>
<feature type="helix" evidence="4">
    <location>
        <begin position="576"/>
        <end position="608"/>
    </location>
</feature>
<feature type="helix" evidence="4">
    <location>
        <begin position="610"/>
        <end position="613"/>
    </location>
</feature>
<feature type="helix" evidence="4">
    <location>
        <begin position="617"/>
        <end position="619"/>
    </location>
</feature>
<feature type="helix" evidence="4">
    <location>
        <begin position="621"/>
        <end position="624"/>
    </location>
</feature>
<feature type="helix" evidence="4">
    <location>
        <begin position="626"/>
        <end position="650"/>
    </location>
</feature>
<feature type="helix" evidence="4">
    <location>
        <begin position="652"/>
        <end position="662"/>
    </location>
</feature>
<feature type="helix" evidence="4">
    <location>
        <begin position="669"/>
        <end position="684"/>
    </location>
</feature>
<feature type="turn" evidence="4">
    <location>
        <begin position="687"/>
        <end position="691"/>
    </location>
</feature>
<feature type="helix" evidence="4">
    <location>
        <begin position="693"/>
        <end position="716"/>
    </location>
</feature>
<feature type="helix" evidence="4">
    <location>
        <begin position="717"/>
        <end position="720"/>
    </location>
</feature>
<feature type="helix" evidence="4">
    <location>
        <begin position="722"/>
        <end position="725"/>
    </location>
</feature>
<feature type="helix" evidence="4">
    <location>
        <begin position="755"/>
        <end position="787"/>
    </location>
</feature>
<feature type="helix" evidence="4">
    <location>
        <begin position="802"/>
        <end position="811"/>
    </location>
</feature>
<name>SPC97_YEAST</name>
<sequence length="823" mass="96825">MEIKEVDDRAELLRYTNNIPLLGKLVNHQPLWSTNPKLKSFSLEKISAPDQRRVQEALVVKDLLNVLIGLEGTYIRYFNDYEPSDPETPIEFKIAKKMDPSFKTFSRRIVRYGKQYMILTRAYEKWSDTSFGMVLQRFAYEIRRFLEDVYLKTLVERLERDFNKVPNFSIRELEQIINETEVNKQMELLYNIYEEIFREIEERRTNQSSQEDFNNFMDSMKNESSLHLRLMVAFDTTVYPVPKGGAILKIFQQKILENLGDRSSVMFLKKLLNNISQDYCTMLYEWLTQGILNDPYQEFMTYDDLEGKTDNIFDTRDRAWDTQYFIRKDVLLRDCDSEEDKNLLFKMLRTGILLKVVRASLQIPTIPSNSSDITIQEINDFADLMEGSNLELYVDKCYSRANEIFLKLFFQGYDLINVLKHLQQIFLGYQSGHNVLKFLTKNMGELTKHYRNDNNANYDKLLQNFELERQSENPNNLMRQLLMIQFDTETLPQVLSHYLQIYPEVPENNSANDDSDPLMHANNFKNMNAILFDELSKERTGAYHGSNLELYTPKSAIYHLKFDINIPYPLNIIISRTCMIKYQIILRYQLVLQYHSRLLDETWMDLNKTPSWKYRGYSHTVKRRIVRATRVLHAKMNHFIKTIMEYFNQNVIDKEVYSLEKCYRNPTLAVAIQNELEGGLTNIMTNRCLSDLIPLQLQIFDIVYKFCKFIKSMRAKLCQLDPVLYEKHKSGMMKTLNEGYRTNNGGQEDVGYQEDAALELIQKLIEYISNASSIFRKCLINFTQELSTEKFDFYDSSSVDAAGIERVLYSIVPPRSASASSQR</sequence>
<accession>P38863</accession>
<accession>D3DLC1</accession>
<proteinExistence type="evidence at protein level"/>
<organism>
    <name type="scientific">Saccharomyces cerevisiae (strain ATCC 204508 / S288c)</name>
    <name type="common">Baker's yeast</name>
    <dbReference type="NCBI Taxonomy" id="559292"/>
    <lineage>
        <taxon>Eukaryota</taxon>
        <taxon>Fungi</taxon>
        <taxon>Dikarya</taxon>
        <taxon>Ascomycota</taxon>
        <taxon>Saccharomycotina</taxon>
        <taxon>Saccharomycetes</taxon>
        <taxon>Saccharomycetales</taxon>
        <taxon>Saccharomycetaceae</taxon>
        <taxon>Saccharomyces</taxon>
    </lineage>
</organism>
<comment type="function">
    <text>Involved in microtubule organization by the microtubule organizing center, the spindle pole body (SPB). Probably part of the microtubule attachment site at the SPB.</text>
</comment>
<comment type="subunit">
    <text evidence="2">Interacts with TUB4, SPC72 and SPC98.</text>
</comment>
<comment type="interaction">
    <interactant intactId="EBI-17786">
        <id>P38863</id>
    </interactant>
    <interactant intactId="EBI-17794">
        <id>P53540</id>
        <label>SPC98</label>
    </interactant>
    <organismsDiffer>false</organismsDiffer>
    <experiments>8</experiments>
</comment>
<comment type="interaction">
    <interactant intactId="EBI-17786">
        <id>P38863</id>
    </interactant>
    <interactant intactId="EBI-19013">
        <id>P53378</id>
        <label>TUB4</label>
    </interactant>
    <organismsDiffer>false</organismsDiffer>
    <experiments>9</experiments>
</comment>
<comment type="subcellular location">
    <subcellularLocation>
        <location>Nucleus</location>
    </subcellularLocation>
    <subcellularLocation>
        <location>Cytoplasm</location>
        <location>Cytoskeleton</location>
        <location>Microtubule organizing center</location>
        <location>Spindle pole body</location>
    </subcellularLocation>
</comment>
<comment type="miscellaneous">
    <text evidence="1">Present with 2230 molecules/cell in log phase SD medium.</text>
</comment>
<comment type="similarity">
    <text evidence="3">Belongs to the TUBGCP family.</text>
</comment>
<evidence type="ECO:0000269" key="1">
    <source>
    </source>
</evidence>
<evidence type="ECO:0000269" key="2">
    <source>
    </source>
</evidence>
<evidence type="ECO:0000305" key="3"/>
<evidence type="ECO:0007829" key="4">
    <source>
        <dbReference type="PDB" id="7M2W"/>
    </source>
</evidence>